<organism>
    <name type="scientific">Solanum bulbocastanum</name>
    <name type="common">Wild potato</name>
    <dbReference type="NCBI Taxonomy" id="147425"/>
    <lineage>
        <taxon>Eukaryota</taxon>
        <taxon>Viridiplantae</taxon>
        <taxon>Streptophyta</taxon>
        <taxon>Embryophyta</taxon>
        <taxon>Tracheophyta</taxon>
        <taxon>Spermatophyta</taxon>
        <taxon>Magnoliopsida</taxon>
        <taxon>eudicotyledons</taxon>
        <taxon>Gunneridae</taxon>
        <taxon>Pentapetalae</taxon>
        <taxon>asterids</taxon>
        <taxon>lamiids</taxon>
        <taxon>Solanales</taxon>
        <taxon>Solanaceae</taxon>
        <taxon>Solanoideae</taxon>
        <taxon>Solaneae</taxon>
        <taxon>Solanum</taxon>
    </lineage>
</organism>
<gene>
    <name evidence="2" type="primary">petA</name>
</gene>
<keyword id="KW-0150">Chloroplast</keyword>
<keyword id="KW-0249">Electron transport</keyword>
<keyword id="KW-0349">Heme</keyword>
<keyword id="KW-0408">Iron</keyword>
<keyword id="KW-0472">Membrane</keyword>
<keyword id="KW-0479">Metal-binding</keyword>
<keyword id="KW-0602">Photosynthesis</keyword>
<keyword id="KW-0934">Plastid</keyword>
<keyword id="KW-0732">Signal</keyword>
<keyword id="KW-0793">Thylakoid</keyword>
<keyword id="KW-0812">Transmembrane</keyword>
<keyword id="KW-1133">Transmembrane helix</keyword>
<keyword id="KW-0813">Transport</keyword>
<evidence type="ECO:0000250" key="1"/>
<evidence type="ECO:0000255" key="2">
    <source>
        <dbReference type="HAMAP-Rule" id="MF_00610"/>
    </source>
</evidence>
<comment type="function">
    <text evidence="2">Component of the cytochrome b6-f complex, which mediates electron transfer between photosystem II (PSII) and photosystem I (PSI), cyclic electron flow around PSI, and state transitions.</text>
</comment>
<comment type="cofactor">
    <cofactor evidence="2">
        <name>heme</name>
        <dbReference type="ChEBI" id="CHEBI:30413"/>
    </cofactor>
    <text evidence="2">Binds 1 heme group covalently.</text>
</comment>
<comment type="subunit">
    <text evidence="1">The 4 large subunits of the cytochrome b6-f complex are cytochrome b6, subunit IV (17 kDa polypeptide, petD), cytochrome f and the Rieske protein, while the 4 small subunits are PetG, PetL, PetM and PetN. The complex functions as a dimer (By similarity).</text>
</comment>
<comment type="subcellular location">
    <subcellularLocation>
        <location evidence="2">Plastid</location>
        <location evidence="2">Chloroplast thylakoid membrane</location>
        <topology evidence="2">Single-pass membrane protein</topology>
    </subcellularLocation>
</comment>
<comment type="similarity">
    <text evidence="2">Belongs to the cytochrome f family.</text>
</comment>
<name>CYF_SOLBU</name>
<reference key="1">
    <citation type="journal article" date="2006" name="Theor. Appl. Genet.">
        <title>Complete chloroplast genome sequences of Solanum bulbocastanum, Solanum lycopersicum and comparative analyses with other Solanaceae genomes.</title>
        <authorList>
            <person name="Daniell H."/>
            <person name="Lee S.-B."/>
            <person name="Grevich J."/>
            <person name="Saski C."/>
            <person name="Quesada-Vargas T."/>
            <person name="Guda C."/>
            <person name="Tomkins J."/>
            <person name="Jansen R.K."/>
        </authorList>
    </citation>
    <scope>NUCLEOTIDE SEQUENCE [LARGE SCALE GENOMIC DNA]</scope>
    <source>
        <strain>cv. PT29</strain>
    </source>
</reference>
<accession>Q2MIH4</accession>
<protein>
    <recommendedName>
        <fullName evidence="2">Cytochrome f</fullName>
    </recommendedName>
</protein>
<feature type="signal peptide" evidence="2">
    <location>
        <begin position="1"/>
        <end position="35"/>
    </location>
</feature>
<feature type="chain" id="PRO_0000275449" description="Cytochrome f">
    <location>
        <begin position="36"/>
        <end position="320"/>
    </location>
</feature>
<feature type="transmembrane region" description="Helical" evidence="2">
    <location>
        <begin position="286"/>
        <end position="306"/>
    </location>
</feature>
<feature type="binding site" description="axial binding residue" evidence="2">
    <location>
        <position position="36"/>
    </location>
    <ligand>
        <name>heme</name>
        <dbReference type="ChEBI" id="CHEBI:30413"/>
    </ligand>
    <ligandPart>
        <name>Fe</name>
        <dbReference type="ChEBI" id="CHEBI:18248"/>
    </ligandPart>
</feature>
<feature type="binding site" description="covalent" evidence="2">
    <location>
        <position position="56"/>
    </location>
    <ligand>
        <name>heme</name>
        <dbReference type="ChEBI" id="CHEBI:30413"/>
    </ligand>
</feature>
<feature type="binding site" description="covalent" evidence="2">
    <location>
        <position position="59"/>
    </location>
    <ligand>
        <name>heme</name>
        <dbReference type="ChEBI" id="CHEBI:30413"/>
    </ligand>
</feature>
<feature type="binding site" description="axial binding residue" evidence="2">
    <location>
        <position position="60"/>
    </location>
    <ligand>
        <name>heme</name>
        <dbReference type="ChEBI" id="CHEBI:30413"/>
    </ligand>
    <ligandPart>
        <name>Fe</name>
        <dbReference type="ChEBI" id="CHEBI:18248"/>
    </ligandPart>
</feature>
<sequence length="320" mass="35218">MQTRNAFSWLKKQITRSISVSLMIYILTRTSISSAYPIFAQQGYENPREATGRIVCANCHLANKPVEIEVPQAVLPDTVFEAVVRIPYDMQLKQVLANGKKGGLNVGAVLILPEGFELAPPDRISPEMKEKIGNLSFQSYRPNKTNILVVGPVPGKKYSEITFPILSPDPATKKDVHFLKYPIYVGGNRGRGQIYPDGNKSNNTVYNATAAGIVSKIIRKEKGGYEITITDASEGRQVVDIIPPGPELLVSEGESIKFDQPLTSNPNVGGFGQGDAEIVLQDPLRVQGLLFFLASVILAQIFLVLKKKQFEKVQLAEMNF</sequence>
<proteinExistence type="inferred from homology"/>
<dbReference type="EMBL" id="DQ347958">
    <property type="protein sequence ID" value="ABC56226.1"/>
    <property type="molecule type" value="Genomic_DNA"/>
</dbReference>
<dbReference type="RefSeq" id="YP_538861.1">
    <property type="nucleotide sequence ID" value="NC_007943.1"/>
</dbReference>
<dbReference type="SMR" id="Q2MIH4"/>
<dbReference type="GeneID" id="3989437"/>
<dbReference type="GO" id="GO:0009535">
    <property type="term" value="C:chloroplast thylakoid membrane"/>
    <property type="evidence" value="ECO:0007669"/>
    <property type="project" value="UniProtKB-SubCell"/>
</dbReference>
<dbReference type="GO" id="GO:0009055">
    <property type="term" value="F:electron transfer activity"/>
    <property type="evidence" value="ECO:0007669"/>
    <property type="project" value="UniProtKB-UniRule"/>
</dbReference>
<dbReference type="GO" id="GO:0020037">
    <property type="term" value="F:heme binding"/>
    <property type="evidence" value="ECO:0007669"/>
    <property type="project" value="InterPro"/>
</dbReference>
<dbReference type="GO" id="GO:0005506">
    <property type="term" value="F:iron ion binding"/>
    <property type="evidence" value="ECO:0007669"/>
    <property type="project" value="InterPro"/>
</dbReference>
<dbReference type="GO" id="GO:0015979">
    <property type="term" value="P:photosynthesis"/>
    <property type="evidence" value="ECO:0007669"/>
    <property type="project" value="UniProtKB-UniRule"/>
</dbReference>
<dbReference type="FunFam" id="1.20.5.700:FF:000001">
    <property type="entry name" value="Cytochrome f"/>
    <property type="match status" value="1"/>
</dbReference>
<dbReference type="FunFam" id="2.40.50.100:FF:000007">
    <property type="entry name" value="Cytochrome f"/>
    <property type="match status" value="1"/>
</dbReference>
<dbReference type="FunFam" id="2.60.40.830:FF:000001">
    <property type="entry name" value="Cytochrome f"/>
    <property type="match status" value="1"/>
</dbReference>
<dbReference type="Gene3D" id="2.40.50.100">
    <property type="match status" value="1"/>
</dbReference>
<dbReference type="Gene3D" id="2.60.40.830">
    <property type="entry name" value="Cytochrome f large domain"/>
    <property type="match status" value="1"/>
</dbReference>
<dbReference type="Gene3D" id="1.20.5.700">
    <property type="entry name" value="Single helix bin"/>
    <property type="match status" value="1"/>
</dbReference>
<dbReference type="HAMAP" id="MF_00610">
    <property type="entry name" value="Cytb6_f_cytF"/>
    <property type="match status" value="1"/>
</dbReference>
<dbReference type="InterPro" id="IPR024058">
    <property type="entry name" value="Cyt-f_TM"/>
</dbReference>
<dbReference type="InterPro" id="IPR002325">
    <property type="entry name" value="Cyt_f"/>
</dbReference>
<dbReference type="InterPro" id="IPR024094">
    <property type="entry name" value="Cyt_f_lg_dom"/>
</dbReference>
<dbReference type="InterPro" id="IPR036826">
    <property type="entry name" value="Cyt_f_lg_dom_sf"/>
</dbReference>
<dbReference type="InterPro" id="IPR011054">
    <property type="entry name" value="Rudment_hybrid_motif"/>
</dbReference>
<dbReference type="PANTHER" id="PTHR33288">
    <property type="match status" value="1"/>
</dbReference>
<dbReference type="PANTHER" id="PTHR33288:SF10">
    <property type="entry name" value="CYTOCHROME F"/>
    <property type="match status" value="1"/>
</dbReference>
<dbReference type="Pfam" id="PF01333">
    <property type="entry name" value="Apocytochr_F_C"/>
    <property type="match status" value="1"/>
</dbReference>
<dbReference type="Pfam" id="PF16639">
    <property type="entry name" value="Apocytochr_F_N"/>
    <property type="match status" value="1"/>
</dbReference>
<dbReference type="PRINTS" id="PR00610">
    <property type="entry name" value="CYTOCHROMEF"/>
</dbReference>
<dbReference type="SUPFAM" id="SSF103431">
    <property type="entry name" value="Cytochrome f subunit of the cytochrome b6f complex, transmembrane anchor"/>
    <property type="match status" value="1"/>
</dbReference>
<dbReference type="SUPFAM" id="SSF49441">
    <property type="entry name" value="Cytochrome f, large domain"/>
    <property type="match status" value="1"/>
</dbReference>
<dbReference type="SUPFAM" id="SSF51246">
    <property type="entry name" value="Rudiment single hybrid motif"/>
    <property type="match status" value="1"/>
</dbReference>
<dbReference type="PROSITE" id="PS51010">
    <property type="entry name" value="CYTF"/>
    <property type="match status" value="1"/>
</dbReference>
<geneLocation type="chloroplast"/>